<proteinExistence type="evidence at protein level"/>
<dbReference type="EMBL" id="AB433170">
    <property type="protein sequence ID" value="BAG48200.1"/>
    <property type="molecule type" value="mRNA"/>
</dbReference>
<dbReference type="EMBL" id="CU329670">
    <property type="protein sequence ID" value="CAB11738.2"/>
    <property type="molecule type" value="Genomic_DNA"/>
</dbReference>
<dbReference type="PIR" id="T39049">
    <property type="entry name" value="T39049"/>
</dbReference>
<dbReference type="RefSeq" id="NP_593908.2">
    <property type="nucleotide sequence ID" value="NM_001019338.3"/>
</dbReference>
<dbReference type="PDB" id="5WE0">
    <property type="method" value="X-ray"/>
    <property type="resolution" value="2.30 A"/>
    <property type="chains" value="B/E/H/K=476-508"/>
</dbReference>
<dbReference type="PDB" id="5WE1">
    <property type="method" value="X-ray"/>
    <property type="resolution" value="3.20 A"/>
    <property type="chains" value="B/D=476-508"/>
</dbReference>
<dbReference type="PDB" id="5WE2">
    <property type="method" value="X-ray"/>
    <property type="resolution" value="2.50 A"/>
    <property type="chains" value="B/D=476-508"/>
</dbReference>
<dbReference type="PDB" id="5XXE">
    <property type="method" value="X-ray"/>
    <property type="resolution" value="2.50 A"/>
    <property type="chains" value="C/D=477-508"/>
</dbReference>
<dbReference type="PDB" id="5XXF">
    <property type="method" value="X-ray"/>
    <property type="resolution" value="3.10 A"/>
    <property type="chains" value="C/D=478-508"/>
</dbReference>
<dbReference type="PDB" id="7CUI">
    <property type="method" value="X-ray"/>
    <property type="resolution" value="2.60 A"/>
    <property type="chains" value="B/D=164-240"/>
</dbReference>
<dbReference type="PDB" id="7CUJ">
    <property type="method" value="X-ray"/>
    <property type="resolution" value="2.40 A"/>
    <property type="chains" value="C/D=426-470"/>
</dbReference>
<dbReference type="PDBsum" id="5WE0"/>
<dbReference type="PDBsum" id="5WE1"/>
<dbReference type="PDBsum" id="5WE2"/>
<dbReference type="PDBsum" id="5XXE"/>
<dbReference type="PDBsum" id="5XXF"/>
<dbReference type="PDBsum" id="7CUI"/>
<dbReference type="PDBsum" id="7CUJ"/>
<dbReference type="SMR" id="O14246"/>
<dbReference type="BioGRID" id="278878">
    <property type="interactions" value="14"/>
</dbReference>
<dbReference type="ComplexPortal" id="CPX-25757">
    <property type="entry name" value="Shelterin complex"/>
</dbReference>
<dbReference type="DIP" id="DIP-59445N"/>
<dbReference type="FunCoup" id="O14246">
    <property type="interactions" value="4"/>
</dbReference>
<dbReference type="IntAct" id="O14246">
    <property type="interactions" value="3"/>
</dbReference>
<dbReference type="MINT" id="O14246"/>
<dbReference type="STRING" id="284812.O14246"/>
<dbReference type="iPTMnet" id="O14246"/>
<dbReference type="PaxDb" id="4896-SPAC6F6.16c.1"/>
<dbReference type="EnsemblFungi" id="SPAC6F6.16c.1">
    <property type="protein sequence ID" value="SPAC6F6.16c.1:pep"/>
    <property type="gene ID" value="SPAC6F6.16c"/>
</dbReference>
<dbReference type="PomBase" id="SPAC6F6.16c">
    <property type="gene designation" value="tpz1"/>
</dbReference>
<dbReference type="VEuPathDB" id="FungiDB:SPAC6F6.16c"/>
<dbReference type="HOGENOM" id="CLU_536555_0_0_1"/>
<dbReference type="InParanoid" id="O14246"/>
<dbReference type="OMA" id="HETRNIN"/>
<dbReference type="PRO" id="PR:O14246"/>
<dbReference type="Proteomes" id="UP000002485">
    <property type="component" value="Chromosome I"/>
</dbReference>
<dbReference type="GO" id="GO:0140445">
    <property type="term" value="C:chromosome, telomeric repeat region"/>
    <property type="evidence" value="ECO:0000314"/>
    <property type="project" value="PomBase"/>
</dbReference>
<dbReference type="GO" id="GO:0070187">
    <property type="term" value="C:shelterin complex"/>
    <property type="evidence" value="ECO:0000314"/>
    <property type="project" value="PomBase"/>
</dbReference>
<dbReference type="GO" id="GO:0005697">
    <property type="term" value="C:telomerase holoenzyme complex"/>
    <property type="evidence" value="ECO:0007669"/>
    <property type="project" value="InterPro"/>
</dbReference>
<dbReference type="GO" id="GO:0000782">
    <property type="term" value="C:telomere cap complex"/>
    <property type="evidence" value="ECO:0000314"/>
    <property type="project" value="PomBase"/>
</dbReference>
<dbReference type="GO" id="GO:0042162">
    <property type="term" value="F:telomeric DNA binding"/>
    <property type="evidence" value="ECO:0000304"/>
    <property type="project" value="PomBase"/>
</dbReference>
<dbReference type="GO" id="GO:0070198">
    <property type="term" value="P:protein localization to chromosome, telomeric region"/>
    <property type="evidence" value="ECO:0000315"/>
    <property type="project" value="PomBase"/>
</dbReference>
<dbReference type="GO" id="GO:0016233">
    <property type="term" value="P:telomere capping"/>
    <property type="evidence" value="ECO:0000316"/>
    <property type="project" value="PomBase"/>
</dbReference>
<dbReference type="GO" id="GO:0000723">
    <property type="term" value="P:telomere maintenance"/>
    <property type="evidence" value="ECO:0000315"/>
    <property type="project" value="PomBase"/>
</dbReference>
<dbReference type="GO" id="GO:0007004">
    <property type="term" value="P:telomere maintenance via telomerase"/>
    <property type="evidence" value="ECO:0000315"/>
    <property type="project" value="PomBase"/>
</dbReference>
<dbReference type="GO" id="GO:1905324">
    <property type="term" value="P:telomere-telomerase complex assembly"/>
    <property type="evidence" value="ECO:0000315"/>
    <property type="project" value="PomBase"/>
</dbReference>
<dbReference type="InterPro" id="IPR028631">
    <property type="entry name" value="ACD"/>
</dbReference>
<dbReference type="InterPro" id="IPR019437">
    <property type="entry name" value="TPP1/Est3"/>
</dbReference>
<dbReference type="PANTHER" id="PTHR14487">
    <property type="entry name" value="ADRENOCORTICAL DYSPLASIA PROTEIN ACD"/>
    <property type="match status" value="1"/>
</dbReference>
<dbReference type="PANTHER" id="PTHR14487:SF3">
    <property type="entry name" value="ADRENOCORTICAL DYSPLASIA PROTEIN HOMOLOG"/>
    <property type="match status" value="1"/>
</dbReference>
<dbReference type="Pfam" id="PF10341">
    <property type="entry name" value="TPP1"/>
    <property type="match status" value="1"/>
</dbReference>
<organism>
    <name type="scientific">Schizosaccharomyces pombe (strain 972 / ATCC 24843)</name>
    <name type="common">Fission yeast</name>
    <dbReference type="NCBI Taxonomy" id="284812"/>
    <lineage>
        <taxon>Eukaryota</taxon>
        <taxon>Fungi</taxon>
        <taxon>Dikarya</taxon>
        <taxon>Ascomycota</taxon>
        <taxon>Taphrinomycotina</taxon>
        <taxon>Schizosaccharomycetes</taxon>
        <taxon>Schizosaccharomycetales</taxon>
        <taxon>Schizosaccharomycetaceae</taxon>
        <taxon>Schizosaccharomyces</taxon>
    </lineage>
</organism>
<protein>
    <recommendedName>
        <fullName>Protection of telomeres protein tpz1</fullName>
    </recommendedName>
    <alternativeName>
        <fullName>Meiotically up-regulated gene 169 protein</fullName>
    </alternativeName>
</protein>
<gene>
    <name type="primary">tpz1</name>
    <name type="synonym">mug169</name>
    <name type="ORF">SPAC6F6.16c</name>
    <name type="ORF">SPAC6F6.18c</name>
</gene>
<reference key="1">
    <citation type="journal article" date="2008" name="Science">
        <title>Fission yeast Pot1-Tpp1 protects telomeres and regulates telomere length.</title>
        <authorList>
            <person name="Miyoshi T."/>
            <person name="Kanoh J."/>
            <person name="Saito M."/>
            <person name="Ishikawa F."/>
        </authorList>
    </citation>
    <scope>NUCLEOTIDE SEQUENCE [MRNA]</scope>
    <scope>FUNCTION</scope>
    <scope>SUBCELLULAR LOCATION</scope>
    <scope>INTERACTION WITH POZ1; POT1 AND CCQ1</scope>
</reference>
<reference key="2">
    <citation type="journal article" date="2002" name="Nature">
        <title>The genome sequence of Schizosaccharomyces pombe.</title>
        <authorList>
            <person name="Wood V."/>
            <person name="Gwilliam R."/>
            <person name="Rajandream M.A."/>
            <person name="Lyne M.H."/>
            <person name="Lyne R."/>
            <person name="Stewart A."/>
            <person name="Sgouros J.G."/>
            <person name="Peat N."/>
            <person name="Hayles J."/>
            <person name="Baker S.G."/>
            <person name="Basham D."/>
            <person name="Bowman S."/>
            <person name="Brooks K."/>
            <person name="Brown D."/>
            <person name="Brown S."/>
            <person name="Chillingworth T."/>
            <person name="Churcher C.M."/>
            <person name="Collins M."/>
            <person name="Connor R."/>
            <person name="Cronin A."/>
            <person name="Davis P."/>
            <person name="Feltwell T."/>
            <person name="Fraser A."/>
            <person name="Gentles S."/>
            <person name="Goble A."/>
            <person name="Hamlin N."/>
            <person name="Harris D.E."/>
            <person name="Hidalgo J."/>
            <person name="Hodgson G."/>
            <person name="Holroyd S."/>
            <person name="Hornsby T."/>
            <person name="Howarth S."/>
            <person name="Huckle E.J."/>
            <person name="Hunt S."/>
            <person name="Jagels K."/>
            <person name="James K.D."/>
            <person name="Jones L."/>
            <person name="Jones M."/>
            <person name="Leather S."/>
            <person name="McDonald S."/>
            <person name="McLean J."/>
            <person name="Mooney P."/>
            <person name="Moule S."/>
            <person name="Mungall K.L."/>
            <person name="Murphy L.D."/>
            <person name="Niblett D."/>
            <person name="Odell C."/>
            <person name="Oliver K."/>
            <person name="O'Neil S."/>
            <person name="Pearson D."/>
            <person name="Quail M.A."/>
            <person name="Rabbinowitsch E."/>
            <person name="Rutherford K.M."/>
            <person name="Rutter S."/>
            <person name="Saunders D."/>
            <person name="Seeger K."/>
            <person name="Sharp S."/>
            <person name="Skelton J."/>
            <person name="Simmonds M.N."/>
            <person name="Squares R."/>
            <person name="Squares S."/>
            <person name="Stevens K."/>
            <person name="Taylor K."/>
            <person name="Taylor R.G."/>
            <person name="Tivey A."/>
            <person name="Walsh S.V."/>
            <person name="Warren T."/>
            <person name="Whitehead S."/>
            <person name="Woodward J.R."/>
            <person name="Volckaert G."/>
            <person name="Aert R."/>
            <person name="Robben J."/>
            <person name="Grymonprez B."/>
            <person name="Weltjens I."/>
            <person name="Vanstreels E."/>
            <person name="Rieger M."/>
            <person name="Schaefer M."/>
            <person name="Mueller-Auer S."/>
            <person name="Gabel C."/>
            <person name="Fuchs M."/>
            <person name="Duesterhoeft A."/>
            <person name="Fritzc C."/>
            <person name="Holzer E."/>
            <person name="Moestl D."/>
            <person name="Hilbert H."/>
            <person name="Borzym K."/>
            <person name="Langer I."/>
            <person name="Beck A."/>
            <person name="Lehrach H."/>
            <person name="Reinhardt R."/>
            <person name="Pohl T.M."/>
            <person name="Eger P."/>
            <person name="Zimmermann W."/>
            <person name="Wedler H."/>
            <person name="Wambutt R."/>
            <person name="Purnelle B."/>
            <person name="Goffeau A."/>
            <person name="Cadieu E."/>
            <person name="Dreano S."/>
            <person name="Gloux S."/>
            <person name="Lelaure V."/>
            <person name="Mottier S."/>
            <person name="Galibert F."/>
            <person name="Aves S.J."/>
            <person name="Xiang Z."/>
            <person name="Hunt C."/>
            <person name="Moore K."/>
            <person name="Hurst S.M."/>
            <person name="Lucas M."/>
            <person name="Rochet M."/>
            <person name="Gaillardin C."/>
            <person name="Tallada V.A."/>
            <person name="Garzon A."/>
            <person name="Thode G."/>
            <person name="Daga R.R."/>
            <person name="Cruzado L."/>
            <person name="Jimenez J."/>
            <person name="Sanchez M."/>
            <person name="del Rey F."/>
            <person name="Benito J."/>
            <person name="Dominguez A."/>
            <person name="Revuelta J.L."/>
            <person name="Moreno S."/>
            <person name="Armstrong J."/>
            <person name="Forsburg S.L."/>
            <person name="Cerutti L."/>
            <person name="Lowe T."/>
            <person name="McCombie W.R."/>
            <person name="Paulsen I."/>
            <person name="Potashkin J."/>
            <person name="Shpakovski G.V."/>
            <person name="Ussery D."/>
            <person name="Barrell B.G."/>
            <person name="Nurse P."/>
        </authorList>
    </citation>
    <scope>NUCLEOTIDE SEQUENCE [LARGE SCALE GENOMIC DNA]</scope>
    <source>
        <strain>972 / ATCC 24843</strain>
    </source>
</reference>
<reference key="3">
    <citation type="journal article" date="2005" name="Curr. Biol.">
        <title>A large-scale screen in S. pombe identifies seven novel genes required for critical meiotic events.</title>
        <authorList>
            <person name="Martin-Castellanos C."/>
            <person name="Blanco M."/>
            <person name="Rozalen A.E."/>
            <person name="Perez-Hidalgo L."/>
            <person name="Garcia A.I."/>
            <person name="Conde F."/>
            <person name="Mata J."/>
            <person name="Ellermeier C."/>
            <person name="Davis L."/>
            <person name="San-Segundo P."/>
            <person name="Smith G.R."/>
            <person name="Moreno S."/>
        </authorList>
    </citation>
    <scope>FUNCTION IN MEIOSIS</scope>
</reference>
<sequence length="508" mass="57684">MSNCLKHPWLENGLLNLIKNADVLPIRVFKCQPLQIFEYIRYEHPIRCKLSDTEFYIEAEFSSQSISDLNNFTEKRITSLRGGIVTLGNFLIHLIPSQSGIIPWIQVESFNFQGCEGAVFGNPKAITTSALFNALLQSPYLAALANEFNRSIKEGSSYQEASLSQQEKPNDNTSNSRDIKNNIQFHWKNMTSLSIEECIIPKGQQLILEKESEENTTHGIYLEERKMAQGLHNSVSETPEVKQEDNDEDLDAYSWSSSTDSAGEIPSLPTNRKILEKIAEKPPPFESPLEDDETPDQTNEHEANQVNVSQLPLNPRGSGISGRPVESTEQLNSSLTIERSQSIQSTDSKQRVETQSHRRSKIEIFDAQDELFDRSICTTIDDSTGKLLNAEETPIKTGDLHSTSASSVISCTPPAINFTSDICNEQIELEYKRKPIPDYDFMKGLETTLQELYVEHQSKKRRLELFQLTNNHQKNSEACEMCRLGLPHGSFFELLRDWKKIEEFRNKS</sequence>
<comment type="function">
    <text evidence="2 3">Telomeric DNA-binding protein that is required to protect the 3'-end telomeric overhang and involved in telomere length regulation. recruits poz1 and ccq1 to telomeres, regulating telomere length negatively and positively respectively.</text>
</comment>
<comment type="subunit">
    <text evidence="3">Interacts with ccq1, pot1 and poz1.</text>
</comment>
<comment type="interaction">
    <interactant intactId="EBI-8802014">
        <id>O14246</id>
    </interactant>
    <interactant intactId="EBI-15953947">
        <id>Q10432</id>
        <label>ccq1</label>
    </interactant>
    <organismsDiffer>false</organismsDiffer>
    <experiments>2</experiments>
</comment>
<comment type="subcellular location">
    <subcellularLocation>
        <location evidence="3">Chromosome</location>
        <location evidence="3">Telomere</location>
    </subcellularLocation>
    <subcellularLocation>
        <location evidence="3">Nucleus</location>
    </subcellularLocation>
</comment>
<keyword id="KW-0002">3D-structure</keyword>
<keyword id="KW-0158">Chromosome</keyword>
<keyword id="KW-0238">DNA-binding</keyword>
<keyword id="KW-0539">Nucleus</keyword>
<keyword id="KW-1185">Reference proteome</keyword>
<keyword id="KW-0779">Telomere</keyword>
<feature type="chain" id="PRO_0000304008" description="Protection of telomeres protein tpz1">
    <location>
        <begin position="1"/>
        <end position="508"/>
    </location>
</feature>
<feature type="region of interest" description="pot1-binding">
    <location>
        <begin position="2"/>
        <end position="223"/>
    </location>
</feature>
<feature type="region of interest" description="Disordered" evidence="1">
    <location>
        <begin position="159"/>
        <end position="178"/>
    </location>
</feature>
<feature type="region of interest" description="Disordered" evidence="1">
    <location>
        <begin position="235"/>
        <end position="269"/>
    </location>
</feature>
<feature type="region of interest" description="Disordered" evidence="1">
    <location>
        <begin position="282"/>
        <end position="358"/>
    </location>
</feature>
<feature type="region of interest" description="ccq1/poz1-binding">
    <location>
        <begin position="379"/>
        <end position="508"/>
    </location>
</feature>
<feature type="compositionally biased region" description="Polar residues" evidence="1">
    <location>
        <begin position="327"/>
        <end position="347"/>
    </location>
</feature>
<feature type="compositionally biased region" description="Basic and acidic residues" evidence="1">
    <location>
        <begin position="348"/>
        <end position="358"/>
    </location>
</feature>
<feature type="helix" evidence="5">
    <location>
        <begin position="188"/>
        <end position="190"/>
    </location>
</feature>
<feature type="helix" evidence="5">
    <location>
        <begin position="196"/>
        <end position="198"/>
    </location>
</feature>
<feature type="helix" evidence="5">
    <location>
        <begin position="202"/>
        <end position="211"/>
    </location>
</feature>
<feature type="helix" evidence="6">
    <location>
        <begin position="441"/>
        <end position="465"/>
    </location>
</feature>
<feature type="helix" evidence="4">
    <location>
        <begin position="480"/>
        <end position="484"/>
    </location>
</feature>
<feature type="helix" evidence="4">
    <location>
        <begin position="490"/>
        <end position="505"/>
    </location>
</feature>
<name>TPZ1_SCHPO</name>
<evidence type="ECO:0000256" key="1">
    <source>
        <dbReference type="SAM" id="MobiDB-lite"/>
    </source>
</evidence>
<evidence type="ECO:0000269" key="2">
    <source>
    </source>
</evidence>
<evidence type="ECO:0000269" key="3">
    <source>
    </source>
</evidence>
<evidence type="ECO:0007829" key="4">
    <source>
        <dbReference type="PDB" id="5WE0"/>
    </source>
</evidence>
<evidence type="ECO:0007829" key="5">
    <source>
        <dbReference type="PDB" id="7CUI"/>
    </source>
</evidence>
<evidence type="ECO:0007829" key="6">
    <source>
        <dbReference type="PDB" id="7CUJ"/>
    </source>
</evidence>
<accession>O14246</accession>
<accession>B3A004</accession>